<sequence>MKISMINYKSLLALLFILASWIIFTVFQNSTKVWSALNLSISLHYWNNSTKSLFPKTPLISLKPLTETELRIKEIIEKLDQQIPPRPFTHVNTTTSATHSTATILNPRDTYCRGDQLHILLEVRDHLGRRKQYGGDFLRARMSSPALMAGASGKVTDFNNGTYLVSFTLFWEGQVSLSLLLIHPSEGVSALWSARNQGYDRVIFTGQFVNGTSQVHSECGLILNTNAELCQYLDNRDQEGFYCVRPQHMPCAALTHMYSKNKKVSYLSKQEKSLFERSNVGVEIMEKFNTISVSKCNKETVAMKEKCKFGMTSTIPSGHVWRNTWNPVSCSLATVKMKECLRGKLIYLMGDSTIRQWMEYFKASINTLKSVDLHESGKLQHQLAVDLDRNINIQWQKYCYPLIGSMTYSVKEMEYLTRAIDRTGGEKNTVIVISLGQHFRPFPIDVFIRRALNVHKAIQHLLLRSPDTMVIIKTENIREMYNDAERFSDFHGYIQYLIIKDIFQDLSVSIIDAWDITIAYGTNNVHPPQHVVGNQINILLNYIC</sequence>
<evidence type="ECO:0000255" key="1"/>
<evidence type="ECO:0000269" key="2">
    <source>
    </source>
</evidence>
<evidence type="ECO:0000303" key="3">
    <source>
    </source>
</evidence>
<evidence type="ECO:0000303" key="4">
    <source>
    </source>
</evidence>
<evidence type="ECO:0000305" key="5"/>
<comment type="subcellular location">
    <subcellularLocation>
        <location evidence="5">Secreted</location>
    </subcellularLocation>
</comment>
<comment type="alternative products">
    <event type="alternative splicing"/>
    <isoform>
        <id>Q6UWF7-1</id>
        <name>1</name>
        <sequence type="displayed"/>
    </isoform>
    <isoform>
        <id>Q6UWF7-2</id>
        <name>2</name>
        <sequence type="described" ref="VSP_014701"/>
    </isoform>
</comment>
<comment type="similarity">
    <text evidence="5">Belongs to the NXPE family.</text>
</comment>
<comment type="sequence caution" evidence="5">
    <conflict type="frameshift">
        <sequence resource="EMBL-CDS" id="BAA90965"/>
    </conflict>
</comment>
<name>NXPE4_HUMAN</name>
<dbReference type="EMBL" id="AY547307">
    <property type="protein sequence ID" value="AAS55888.1"/>
    <property type="molecule type" value="mRNA"/>
</dbReference>
<dbReference type="EMBL" id="AY358805">
    <property type="protein sequence ID" value="AAQ89165.1"/>
    <property type="molecule type" value="mRNA"/>
</dbReference>
<dbReference type="EMBL" id="AK000134">
    <property type="protein sequence ID" value="BAA90965.1"/>
    <property type="status" value="ALT_FRAME"/>
    <property type="molecule type" value="mRNA"/>
</dbReference>
<dbReference type="CCDS" id="CCDS41718.1">
    <molecule id="Q6UWF7-1"/>
</dbReference>
<dbReference type="CCDS" id="CCDS44737.1">
    <molecule id="Q6UWF7-2"/>
</dbReference>
<dbReference type="RefSeq" id="NP_001071107.1">
    <molecule id="Q6UWF7-1"/>
    <property type="nucleotide sequence ID" value="NM_001077639.2"/>
</dbReference>
<dbReference type="RefSeq" id="NP_060148.2">
    <molecule id="Q6UWF7-2"/>
    <property type="nucleotide sequence ID" value="NM_017678.3"/>
</dbReference>
<dbReference type="RefSeq" id="XP_011541183.1">
    <molecule id="Q6UWF7-1"/>
    <property type="nucleotide sequence ID" value="XM_011542881.3"/>
</dbReference>
<dbReference type="RefSeq" id="XP_047283103.1">
    <molecule id="Q6UWF7-1"/>
    <property type="nucleotide sequence ID" value="XM_047427147.1"/>
</dbReference>
<dbReference type="RefSeq" id="XP_047283104.1">
    <molecule id="Q6UWF7-1"/>
    <property type="nucleotide sequence ID" value="XM_047427148.1"/>
</dbReference>
<dbReference type="RefSeq" id="XP_047283105.1">
    <molecule id="Q6UWF7-1"/>
    <property type="nucleotide sequence ID" value="XM_047427149.1"/>
</dbReference>
<dbReference type="RefSeq" id="XP_047283106.1">
    <molecule id="Q6UWF7-1"/>
    <property type="nucleotide sequence ID" value="XM_047427150.1"/>
</dbReference>
<dbReference type="RefSeq" id="XP_047283107.1">
    <molecule id="Q6UWF7-1"/>
    <property type="nucleotide sequence ID" value="XM_047427151.1"/>
</dbReference>
<dbReference type="RefSeq" id="XP_047283108.1">
    <molecule id="Q6UWF7-1"/>
    <property type="nucleotide sequence ID" value="XM_047427152.1"/>
</dbReference>
<dbReference type="RefSeq" id="XP_054225156.1">
    <molecule id="Q6UWF7-1"/>
    <property type="nucleotide sequence ID" value="XM_054369181.1"/>
</dbReference>
<dbReference type="RefSeq" id="XP_054225157.1">
    <molecule id="Q6UWF7-1"/>
    <property type="nucleotide sequence ID" value="XM_054369182.1"/>
</dbReference>
<dbReference type="RefSeq" id="XP_054225158.1">
    <molecule id="Q6UWF7-1"/>
    <property type="nucleotide sequence ID" value="XM_054369183.1"/>
</dbReference>
<dbReference type="RefSeq" id="XP_054225159.1">
    <molecule id="Q6UWF7-1"/>
    <property type="nucleotide sequence ID" value="XM_054369184.1"/>
</dbReference>
<dbReference type="RefSeq" id="XP_054225160.1">
    <molecule id="Q6UWF7-1"/>
    <property type="nucleotide sequence ID" value="XM_054369185.1"/>
</dbReference>
<dbReference type="RefSeq" id="XP_054225161.1">
    <molecule id="Q6UWF7-1"/>
    <property type="nucleotide sequence ID" value="XM_054369186.1"/>
</dbReference>
<dbReference type="BioGRID" id="120181">
    <property type="interactions" value="3"/>
</dbReference>
<dbReference type="FunCoup" id="Q6UWF7">
    <property type="interactions" value="21"/>
</dbReference>
<dbReference type="IntAct" id="Q6UWF7">
    <property type="interactions" value="1"/>
</dbReference>
<dbReference type="STRING" id="9606.ENSP00000364627"/>
<dbReference type="GlyCosmos" id="Q6UWF7">
    <property type="glycosylation" value="7 sites, No reported glycans"/>
</dbReference>
<dbReference type="GlyGen" id="Q6UWF7">
    <property type="glycosylation" value="7 sites"/>
</dbReference>
<dbReference type="iPTMnet" id="Q6UWF7"/>
<dbReference type="PhosphoSitePlus" id="Q6UWF7"/>
<dbReference type="BioMuta" id="NXPE4"/>
<dbReference type="DMDM" id="71153004"/>
<dbReference type="jPOST" id="Q6UWF7"/>
<dbReference type="MassIVE" id="Q6UWF7"/>
<dbReference type="PaxDb" id="9606-ENSP00000364627"/>
<dbReference type="PeptideAtlas" id="Q6UWF7"/>
<dbReference type="ProteomicsDB" id="67475">
    <molecule id="Q6UWF7-1"/>
</dbReference>
<dbReference type="ProteomicsDB" id="67476">
    <molecule id="Q6UWF7-2"/>
</dbReference>
<dbReference type="Antibodypedia" id="9003">
    <property type="antibodies" value="77 antibodies from 18 providers"/>
</dbReference>
<dbReference type="DNASU" id="54827"/>
<dbReference type="Ensembl" id="ENST00000375478.4">
    <molecule id="Q6UWF7-1"/>
    <property type="protein sequence ID" value="ENSP00000364627.3"/>
    <property type="gene ID" value="ENSG00000137634.10"/>
</dbReference>
<dbReference type="Ensembl" id="ENST00000424261.6">
    <molecule id="Q6UWF7-2"/>
    <property type="protein sequence ID" value="ENSP00000401503.2"/>
    <property type="gene ID" value="ENSG00000137634.10"/>
</dbReference>
<dbReference type="GeneID" id="54827"/>
<dbReference type="KEGG" id="hsa:54827"/>
<dbReference type="MANE-Select" id="ENST00000375478.4">
    <property type="protein sequence ID" value="ENSP00000364627.3"/>
    <property type="RefSeq nucleotide sequence ID" value="NM_001077639.2"/>
    <property type="RefSeq protein sequence ID" value="NP_001071107.1"/>
</dbReference>
<dbReference type="UCSC" id="uc001ppc.4">
    <molecule id="Q6UWF7-1"/>
    <property type="organism name" value="human"/>
</dbReference>
<dbReference type="AGR" id="HGNC:23117"/>
<dbReference type="CTD" id="54827"/>
<dbReference type="DisGeNET" id="54827"/>
<dbReference type="GeneCards" id="NXPE4"/>
<dbReference type="HGNC" id="HGNC:23117">
    <property type="gene designation" value="NXPE4"/>
</dbReference>
<dbReference type="HPA" id="ENSG00000137634">
    <property type="expression patterns" value="Group enriched (intestine, salivary gland)"/>
</dbReference>
<dbReference type="MIM" id="618133">
    <property type="type" value="gene"/>
</dbReference>
<dbReference type="neXtProt" id="NX_Q6UWF7"/>
<dbReference type="OpenTargets" id="ENSG00000137634"/>
<dbReference type="PharmGKB" id="PA134871713"/>
<dbReference type="VEuPathDB" id="HostDB:ENSG00000137634"/>
<dbReference type="eggNOG" id="ENOG502QW5F">
    <property type="taxonomic scope" value="Eukaryota"/>
</dbReference>
<dbReference type="GeneTree" id="ENSGT00950000182866"/>
<dbReference type="HOGENOM" id="CLU_031119_1_0_1"/>
<dbReference type="InParanoid" id="Q6UWF7"/>
<dbReference type="OMA" id="IYIQWQR"/>
<dbReference type="OrthoDB" id="2112051at2759"/>
<dbReference type="PAN-GO" id="Q6UWF7">
    <property type="GO annotations" value="0 GO annotations based on evolutionary models"/>
</dbReference>
<dbReference type="PhylomeDB" id="Q6UWF7"/>
<dbReference type="TreeFam" id="TF329555"/>
<dbReference type="PathwayCommons" id="Q6UWF7"/>
<dbReference type="SignaLink" id="Q6UWF7"/>
<dbReference type="BioGRID-ORCS" id="54827">
    <property type="hits" value="10 hits in 1145 CRISPR screens"/>
</dbReference>
<dbReference type="GenomeRNAi" id="54827"/>
<dbReference type="Pharos" id="Q6UWF7">
    <property type="development level" value="Tdark"/>
</dbReference>
<dbReference type="PRO" id="PR:Q6UWF7"/>
<dbReference type="Proteomes" id="UP000005640">
    <property type="component" value="Chromosome 11"/>
</dbReference>
<dbReference type="RNAct" id="Q6UWF7">
    <property type="molecule type" value="protein"/>
</dbReference>
<dbReference type="Bgee" id="ENSG00000137634">
    <property type="expression patterns" value="Expressed in rectum and 53 other cell types or tissues"/>
</dbReference>
<dbReference type="GO" id="GO:0070062">
    <property type="term" value="C:extracellular exosome"/>
    <property type="evidence" value="ECO:0007005"/>
    <property type="project" value="UniProtKB"/>
</dbReference>
<dbReference type="FunFam" id="2.60.40.10:FF:000920">
    <property type="entry name" value="NXPE family member 4"/>
    <property type="match status" value="1"/>
</dbReference>
<dbReference type="Gene3D" id="2.60.40.10">
    <property type="entry name" value="Immunoglobulins"/>
    <property type="match status" value="1"/>
</dbReference>
<dbReference type="InterPro" id="IPR013783">
    <property type="entry name" value="Ig-like_fold"/>
</dbReference>
<dbReference type="InterPro" id="IPR014756">
    <property type="entry name" value="Ig_E-set"/>
</dbReference>
<dbReference type="InterPro" id="IPR057106">
    <property type="entry name" value="NXPE4_C"/>
</dbReference>
<dbReference type="InterPro" id="IPR026845">
    <property type="entry name" value="NXPH/NXPE"/>
</dbReference>
<dbReference type="PANTHER" id="PTHR16165">
    <property type="entry name" value="NXPE FAMILY MEMBER"/>
    <property type="match status" value="1"/>
</dbReference>
<dbReference type="PANTHER" id="PTHR16165:SF27">
    <property type="entry name" value="NXPE FAMILY MEMBER 4"/>
    <property type="match status" value="1"/>
</dbReference>
<dbReference type="Pfam" id="PF06312">
    <property type="entry name" value="Neurexophilin"/>
    <property type="match status" value="1"/>
</dbReference>
<dbReference type="Pfam" id="PF24536">
    <property type="entry name" value="NXPE4_C"/>
    <property type="match status" value="1"/>
</dbReference>
<dbReference type="SUPFAM" id="SSF81296">
    <property type="entry name" value="E set domains"/>
    <property type="match status" value="1"/>
</dbReference>
<gene>
    <name type="primary">NXPE4</name>
    <name type="synonym">C11orf33</name>
    <name type="synonym">FAM55D</name>
    <name type="ORF">UNQ3018/PRO9799</name>
</gene>
<reference key="1">
    <citation type="journal article" date="2004" name="Int. J. Oncol.">
        <title>Search for epithelial-specific mRNAs in peripheral blood of patients with colon cancer by RT-PCR.</title>
        <authorList>
            <person name="Solmi R."/>
            <person name="De Sanctis P."/>
            <person name="Zucchini C."/>
            <person name="Ugolini G."/>
            <person name="Rosati G."/>
            <person name="Del Governatore M."/>
            <person name="Coppola D."/>
            <person name="Yeatman T.J."/>
            <person name="Lenzi L."/>
            <person name="Caira A."/>
            <person name="Zanotti S."/>
            <person name="Taffurelli M."/>
            <person name="Carinci P."/>
            <person name="Valvassori L."/>
            <person name="Strippoli P."/>
        </authorList>
    </citation>
    <scope>NUCLEOTIDE SEQUENCE [MRNA] (ISOFORM 2)</scope>
    <scope>VARIANTS HIS-398 AND VAL-451</scope>
    <source>
        <tissue>Colon</tissue>
    </source>
</reference>
<reference key="2">
    <citation type="journal article" date="2003" name="Genome Res.">
        <title>The secreted protein discovery initiative (SPDI), a large-scale effort to identify novel human secreted and transmembrane proteins: a bioinformatics assessment.</title>
        <authorList>
            <person name="Clark H.F."/>
            <person name="Gurney A.L."/>
            <person name="Abaya E."/>
            <person name="Baker K."/>
            <person name="Baldwin D.T."/>
            <person name="Brush J."/>
            <person name="Chen J."/>
            <person name="Chow B."/>
            <person name="Chui C."/>
            <person name="Crowley C."/>
            <person name="Currell B."/>
            <person name="Deuel B."/>
            <person name="Dowd P."/>
            <person name="Eaton D."/>
            <person name="Foster J.S."/>
            <person name="Grimaldi C."/>
            <person name="Gu Q."/>
            <person name="Hass P.E."/>
            <person name="Heldens S."/>
            <person name="Huang A."/>
            <person name="Kim H.S."/>
            <person name="Klimowski L."/>
            <person name="Jin Y."/>
            <person name="Johnson S."/>
            <person name="Lee J."/>
            <person name="Lewis L."/>
            <person name="Liao D."/>
            <person name="Mark M.R."/>
            <person name="Robbie E."/>
            <person name="Sanchez C."/>
            <person name="Schoenfeld J."/>
            <person name="Seshagiri S."/>
            <person name="Simmons L."/>
            <person name="Singh J."/>
            <person name="Smith V."/>
            <person name="Stinson J."/>
            <person name="Vagts A."/>
            <person name="Vandlen R.L."/>
            <person name="Watanabe C."/>
            <person name="Wieand D."/>
            <person name="Woods K."/>
            <person name="Xie M.-H."/>
            <person name="Yansura D.G."/>
            <person name="Yi S."/>
            <person name="Yu G."/>
            <person name="Yuan J."/>
            <person name="Zhang M."/>
            <person name="Zhang Z."/>
            <person name="Goddard A.D."/>
            <person name="Wood W.I."/>
            <person name="Godowski P.J."/>
            <person name="Gray A.M."/>
        </authorList>
    </citation>
    <scope>NUCLEOTIDE SEQUENCE [LARGE SCALE MRNA] (ISOFORM 1)</scope>
</reference>
<reference key="3">
    <citation type="journal article" date="2004" name="Nat. Genet.">
        <title>Complete sequencing and characterization of 21,243 full-length human cDNAs.</title>
        <authorList>
            <person name="Ota T."/>
            <person name="Suzuki Y."/>
            <person name="Nishikawa T."/>
            <person name="Otsuki T."/>
            <person name="Sugiyama T."/>
            <person name="Irie R."/>
            <person name="Wakamatsu A."/>
            <person name="Hayashi K."/>
            <person name="Sato H."/>
            <person name="Nagai K."/>
            <person name="Kimura K."/>
            <person name="Makita H."/>
            <person name="Sekine M."/>
            <person name="Obayashi M."/>
            <person name="Nishi T."/>
            <person name="Shibahara T."/>
            <person name="Tanaka T."/>
            <person name="Ishii S."/>
            <person name="Yamamoto J."/>
            <person name="Saito K."/>
            <person name="Kawai Y."/>
            <person name="Isono Y."/>
            <person name="Nakamura Y."/>
            <person name="Nagahari K."/>
            <person name="Murakami K."/>
            <person name="Yasuda T."/>
            <person name="Iwayanagi T."/>
            <person name="Wagatsuma M."/>
            <person name="Shiratori A."/>
            <person name="Sudo H."/>
            <person name="Hosoiri T."/>
            <person name="Kaku Y."/>
            <person name="Kodaira H."/>
            <person name="Kondo H."/>
            <person name="Sugawara M."/>
            <person name="Takahashi M."/>
            <person name="Kanda K."/>
            <person name="Yokoi T."/>
            <person name="Furuya T."/>
            <person name="Kikkawa E."/>
            <person name="Omura Y."/>
            <person name="Abe K."/>
            <person name="Kamihara K."/>
            <person name="Katsuta N."/>
            <person name="Sato K."/>
            <person name="Tanikawa M."/>
            <person name="Yamazaki M."/>
            <person name="Ninomiya K."/>
            <person name="Ishibashi T."/>
            <person name="Yamashita H."/>
            <person name="Murakawa K."/>
            <person name="Fujimori K."/>
            <person name="Tanai H."/>
            <person name="Kimata M."/>
            <person name="Watanabe M."/>
            <person name="Hiraoka S."/>
            <person name="Chiba Y."/>
            <person name="Ishida S."/>
            <person name="Ono Y."/>
            <person name="Takiguchi S."/>
            <person name="Watanabe S."/>
            <person name="Yosida M."/>
            <person name="Hotuta T."/>
            <person name="Kusano J."/>
            <person name="Kanehori K."/>
            <person name="Takahashi-Fujii A."/>
            <person name="Hara H."/>
            <person name="Tanase T.-O."/>
            <person name="Nomura Y."/>
            <person name="Togiya S."/>
            <person name="Komai F."/>
            <person name="Hara R."/>
            <person name="Takeuchi K."/>
            <person name="Arita M."/>
            <person name="Imose N."/>
            <person name="Musashino K."/>
            <person name="Yuuki H."/>
            <person name="Oshima A."/>
            <person name="Sasaki N."/>
            <person name="Aotsuka S."/>
            <person name="Yoshikawa Y."/>
            <person name="Matsunawa H."/>
            <person name="Ichihara T."/>
            <person name="Shiohata N."/>
            <person name="Sano S."/>
            <person name="Moriya S."/>
            <person name="Momiyama H."/>
            <person name="Satoh N."/>
            <person name="Takami S."/>
            <person name="Terashima Y."/>
            <person name="Suzuki O."/>
            <person name="Nakagawa S."/>
            <person name="Senoh A."/>
            <person name="Mizoguchi H."/>
            <person name="Goto Y."/>
            <person name="Shimizu F."/>
            <person name="Wakebe H."/>
            <person name="Hishigaki H."/>
            <person name="Watanabe T."/>
            <person name="Sugiyama A."/>
            <person name="Takemoto M."/>
            <person name="Kawakami B."/>
            <person name="Yamazaki M."/>
            <person name="Watanabe K."/>
            <person name="Kumagai A."/>
            <person name="Itakura S."/>
            <person name="Fukuzumi Y."/>
            <person name="Fujimori Y."/>
            <person name="Komiyama M."/>
            <person name="Tashiro H."/>
            <person name="Tanigami A."/>
            <person name="Fujiwara T."/>
            <person name="Ono T."/>
            <person name="Yamada K."/>
            <person name="Fujii Y."/>
            <person name="Ozaki K."/>
            <person name="Hirao M."/>
            <person name="Ohmori Y."/>
            <person name="Kawabata A."/>
            <person name="Hikiji T."/>
            <person name="Kobatake N."/>
            <person name="Inagaki H."/>
            <person name="Ikema Y."/>
            <person name="Okamoto S."/>
            <person name="Okitani R."/>
            <person name="Kawakami T."/>
            <person name="Noguchi S."/>
            <person name="Itoh T."/>
            <person name="Shigeta K."/>
            <person name="Senba T."/>
            <person name="Matsumura K."/>
            <person name="Nakajima Y."/>
            <person name="Mizuno T."/>
            <person name="Morinaga M."/>
            <person name="Sasaki M."/>
            <person name="Togashi T."/>
            <person name="Oyama M."/>
            <person name="Hata H."/>
            <person name="Watanabe M."/>
            <person name="Komatsu T."/>
            <person name="Mizushima-Sugano J."/>
            <person name="Satoh T."/>
            <person name="Shirai Y."/>
            <person name="Takahashi Y."/>
            <person name="Nakagawa K."/>
            <person name="Okumura K."/>
            <person name="Nagase T."/>
            <person name="Nomura N."/>
            <person name="Kikuchi H."/>
            <person name="Masuho Y."/>
            <person name="Yamashita R."/>
            <person name="Nakai K."/>
            <person name="Yada T."/>
            <person name="Nakamura Y."/>
            <person name="Ohara O."/>
            <person name="Isogai T."/>
            <person name="Sugano S."/>
        </authorList>
    </citation>
    <scope>NUCLEOTIDE SEQUENCE [LARGE SCALE MRNA] (ISOFORM 2)</scope>
    <source>
        <tissue>Colon</tissue>
    </source>
</reference>
<proteinExistence type="evidence at protein level"/>
<organism>
    <name type="scientific">Homo sapiens</name>
    <name type="common">Human</name>
    <dbReference type="NCBI Taxonomy" id="9606"/>
    <lineage>
        <taxon>Eukaryota</taxon>
        <taxon>Metazoa</taxon>
        <taxon>Chordata</taxon>
        <taxon>Craniata</taxon>
        <taxon>Vertebrata</taxon>
        <taxon>Euteleostomi</taxon>
        <taxon>Mammalia</taxon>
        <taxon>Eutheria</taxon>
        <taxon>Euarchontoglires</taxon>
        <taxon>Primates</taxon>
        <taxon>Haplorrhini</taxon>
        <taxon>Catarrhini</taxon>
        <taxon>Hominidae</taxon>
        <taxon>Homo</taxon>
    </lineage>
</organism>
<accession>Q6UWF7</accession>
<accession>Q6QDB4</accession>
<accession>Q9NXP5</accession>
<feature type="signal peptide" evidence="1">
    <location>
        <begin position="1"/>
        <end position="27"/>
    </location>
</feature>
<feature type="chain" id="PRO_0000019553" description="NXPE family member 4">
    <location>
        <begin position="28"/>
        <end position="544"/>
    </location>
</feature>
<feature type="glycosylation site" description="N-linked (GlcNAc...) asparagine" evidence="1">
    <location>
        <position position="29"/>
    </location>
</feature>
<feature type="glycosylation site" description="N-linked (GlcNAc...) asparagine" evidence="1">
    <location>
        <position position="38"/>
    </location>
</feature>
<feature type="glycosylation site" description="N-linked (GlcNAc...) asparagine" evidence="1">
    <location>
        <position position="47"/>
    </location>
</feature>
<feature type="glycosylation site" description="N-linked (GlcNAc...) asparagine" evidence="1">
    <location>
        <position position="48"/>
    </location>
</feature>
<feature type="glycosylation site" description="N-linked (GlcNAc...) asparagine" evidence="1">
    <location>
        <position position="92"/>
    </location>
</feature>
<feature type="glycosylation site" description="N-linked (GlcNAc...) asparagine" evidence="1">
    <location>
        <position position="160"/>
    </location>
</feature>
<feature type="glycosylation site" description="N-linked (GlcNAc...) asparagine" evidence="1">
    <location>
        <position position="210"/>
    </location>
</feature>
<feature type="splice variant" id="VSP_014701" description="In isoform 2." evidence="3 4">
    <location>
        <begin position="1"/>
        <end position="284"/>
    </location>
</feature>
<feature type="sequence variant" id="VAR_049025" description="In dbSNP:rs550897." evidence="2">
    <original>Y</original>
    <variation>H</variation>
    <location>
        <position position="398"/>
    </location>
</feature>
<feature type="sequence variant" id="VAR_049026" description="In dbSNP:rs10891705." evidence="2">
    <original>A</original>
    <variation>V</variation>
    <location>
        <position position="451"/>
    </location>
</feature>
<feature type="sequence conflict" description="In Ref. 3; BAA90965." evidence="5" ref="3">
    <original>V</original>
    <variation>A</variation>
    <location>
        <position position="293"/>
    </location>
</feature>
<keyword id="KW-0025">Alternative splicing</keyword>
<keyword id="KW-0325">Glycoprotein</keyword>
<keyword id="KW-1267">Proteomics identification</keyword>
<keyword id="KW-1185">Reference proteome</keyword>
<keyword id="KW-0964">Secreted</keyword>
<keyword id="KW-0732">Signal</keyword>
<protein>
    <recommendedName>
        <fullName>NXPE family member 4</fullName>
    </recommendedName>
    <alternativeName>
        <fullName>Protein FAM55D</fullName>
    </alternativeName>
</protein>